<name>ILVD_BURMA</name>
<organism>
    <name type="scientific">Burkholderia mallei (strain ATCC 23344)</name>
    <dbReference type="NCBI Taxonomy" id="243160"/>
    <lineage>
        <taxon>Bacteria</taxon>
        <taxon>Pseudomonadati</taxon>
        <taxon>Pseudomonadota</taxon>
        <taxon>Betaproteobacteria</taxon>
        <taxon>Burkholderiales</taxon>
        <taxon>Burkholderiaceae</taxon>
        <taxon>Burkholderia</taxon>
        <taxon>pseudomallei group</taxon>
    </lineage>
</organism>
<evidence type="ECO:0000255" key="1">
    <source>
        <dbReference type="HAMAP-Rule" id="MF_00012"/>
    </source>
</evidence>
<dbReference type="EC" id="4.2.1.9" evidence="1"/>
<dbReference type="EMBL" id="CP000010">
    <property type="protein sequence ID" value="AAU49614.1"/>
    <property type="molecule type" value="Genomic_DNA"/>
</dbReference>
<dbReference type="RefSeq" id="WP_004191611.1">
    <property type="nucleotide sequence ID" value="NC_006348.1"/>
</dbReference>
<dbReference type="RefSeq" id="YP_102452.1">
    <property type="nucleotide sequence ID" value="NC_006348.1"/>
</dbReference>
<dbReference type="SMR" id="Q62LG7"/>
<dbReference type="GeneID" id="92978440"/>
<dbReference type="KEGG" id="bma:BMA0677"/>
<dbReference type="PATRIC" id="fig|243160.12.peg.699"/>
<dbReference type="eggNOG" id="COG0129">
    <property type="taxonomic scope" value="Bacteria"/>
</dbReference>
<dbReference type="HOGENOM" id="CLU_014271_4_1_4"/>
<dbReference type="UniPathway" id="UPA00047">
    <property type="reaction ID" value="UER00057"/>
</dbReference>
<dbReference type="UniPathway" id="UPA00049">
    <property type="reaction ID" value="UER00061"/>
</dbReference>
<dbReference type="Proteomes" id="UP000006693">
    <property type="component" value="Chromosome 1"/>
</dbReference>
<dbReference type="GO" id="GO:0051537">
    <property type="term" value="F:2 iron, 2 sulfur cluster binding"/>
    <property type="evidence" value="ECO:0007669"/>
    <property type="project" value="UniProtKB-UniRule"/>
</dbReference>
<dbReference type="GO" id="GO:0004160">
    <property type="term" value="F:dihydroxy-acid dehydratase activity"/>
    <property type="evidence" value="ECO:0007669"/>
    <property type="project" value="UniProtKB-UniRule"/>
</dbReference>
<dbReference type="GO" id="GO:0000287">
    <property type="term" value="F:magnesium ion binding"/>
    <property type="evidence" value="ECO:0007669"/>
    <property type="project" value="UniProtKB-UniRule"/>
</dbReference>
<dbReference type="GO" id="GO:0009097">
    <property type="term" value="P:isoleucine biosynthetic process"/>
    <property type="evidence" value="ECO:0007669"/>
    <property type="project" value="UniProtKB-UniRule"/>
</dbReference>
<dbReference type="GO" id="GO:0009099">
    <property type="term" value="P:L-valine biosynthetic process"/>
    <property type="evidence" value="ECO:0007669"/>
    <property type="project" value="UniProtKB-UniRule"/>
</dbReference>
<dbReference type="FunFam" id="3.50.30.80:FF:000001">
    <property type="entry name" value="Dihydroxy-acid dehydratase"/>
    <property type="match status" value="1"/>
</dbReference>
<dbReference type="Gene3D" id="3.50.30.80">
    <property type="entry name" value="IlvD/EDD C-terminal domain-like"/>
    <property type="match status" value="1"/>
</dbReference>
<dbReference type="HAMAP" id="MF_00012">
    <property type="entry name" value="IlvD"/>
    <property type="match status" value="1"/>
</dbReference>
<dbReference type="InterPro" id="IPR050165">
    <property type="entry name" value="DHAD_IlvD/Edd"/>
</dbReference>
<dbReference type="InterPro" id="IPR042096">
    <property type="entry name" value="Dihydro-acid_dehy_C"/>
</dbReference>
<dbReference type="InterPro" id="IPR004404">
    <property type="entry name" value="DihydroxyA_deHydtase"/>
</dbReference>
<dbReference type="InterPro" id="IPR020558">
    <property type="entry name" value="DiOHA_6PGluconate_deHydtase_CS"/>
</dbReference>
<dbReference type="InterPro" id="IPR056740">
    <property type="entry name" value="ILV_EDD_C"/>
</dbReference>
<dbReference type="InterPro" id="IPR000581">
    <property type="entry name" value="ILV_EDD_N"/>
</dbReference>
<dbReference type="InterPro" id="IPR037237">
    <property type="entry name" value="IlvD/EDD_N"/>
</dbReference>
<dbReference type="NCBIfam" id="TIGR00110">
    <property type="entry name" value="ilvD"/>
    <property type="match status" value="1"/>
</dbReference>
<dbReference type="NCBIfam" id="NF002068">
    <property type="entry name" value="PRK00911.1"/>
    <property type="match status" value="1"/>
</dbReference>
<dbReference type="PANTHER" id="PTHR21000">
    <property type="entry name" value="DIHYDROXY-ACID DEHYDRATASE DAD"/>
    <property type="match status" value="1"/>
</dbReference>
<dbReference type="PANTHER" id="PTHR21000:SF5">
    <property type="entry name" value="DIHYDROXY-ACID DEHYDRATASE, MITOCHONDRIAL"/>
    <property type="match status" value="1"/>
</dbReference>
<dbReference type="Pfam" id="PF24877">
    <property type="entry name" value="ILV_EDD_C"/>
    <property type="match status" value="1"/>
</dbReference>
<dbReference type="Pfam" id="PF00920">
    <property type="entry name" value="ILVD_EDD_N"/>
    <property type="match status" value="1"/>
</dbReference>
<dbReference type="SUPFAM" id="SSF143975">
    <property type="entry name" value="IlvD/EDD N-terminal domain-like"/>
    <property type="match status" value="1"/>
</dbReference>
<dbReference type="SUPFAM" id="SSF52016">
    <property type="entry name" value="LeuD/IlvD-like"/>
    <property type="match status" value="1"/>
</dbReference>
<dbReference type="PROSITE" id="PS00886">
    <property type="entry name" value="ILVD_EDD_1"/>
    <property type="match status" value="1"/>
</dbReference>
<dbReference type="PROSITE" id="PS00887">
    <property type="entry name" value="ILVD_EDD_2"/>
    <property type="match status" value="1"/>
</dbReference>
<comment type="function">
    <text evidence="1">Functions in the biosynthesis of branched-chain amino acids. Catalyzes the dehydration of (2R,3R)-2,3-dihydroxy-3-methylpentanoate (2,3-dihydroxy-3-methylvalerate) into 2-oxo-3-methylpentanoate (2-oxo-3-methylvalerate) and of (2R)-2,3-dihydroxy-3-methylbutanoate (2,3-dihydroxyisovalerate) into 2-oxo-3-methylbutanoate (2-oxoisovalerate), the penultimate precursor to L-isoleucine and L-valine, respectively.</text>
</comment>
<comment type="catalytic activity">
    <reaction evidence="1">
        <text>(2R)-2,3-dihydroxy-3-methylbutanoate = 3-methyl-2-oxobutanoate + H2O</text>
        <dbReference type="Rhea" id="RHEA:24809"/>
        <dbReference type="ChEBI" id="CHEBI:11851"/>
        <dbReference type="ChEBI" id="CHEBI:15377"/>
        <dbReference type="ChEBI" id="CHEBI:49072"/>
        <dbReference type="EC" id="4.2.1.9"/>
    </reaction>
    <physiologicalReaction direction="left-to-right" evidence="1">
        <dbReference type="Rhea" id="RHEA:24810"/>
    </physiologicalReaction>
</comment>
<comment type="catalytic activity">
    <reaction evidence="1">
        <text>(2R,3R)-2,3-dihydroxy-3-methylpentanoate = (S)-3-methyl-2-oxopentanoate + H2O</text>
        <dbReference type="Rhea" id="RHEA:27694"/>
        <dbReference type="ChEBI" id="CHEBI:15377"/>
        <dbReference type="ChEBI" id="CHEBI:35146"/>
        <dbReference type="ChEBI" id="CHEBI:49258"/>
        <dbReference type="EC" id="4.2.1.9"/>
    </reaction>
    <physiologicalReaction direction="left-to-right" evidence="1">
        <dbReference type="Rhea" id="RHEA:27695"/>
    </physiologicalReaction>
</comment>
<comment type="cofactor">
    <cofactor evidence="1">
        <name>[2Fe-2S] cluster</name>
        <dbReference type="ChEBI" id="CHEBI:190135"/>
    </cofactor>
    <text evidence="1">Binds 1 [2Fe-2S] cluster per subunit. This cluster acts as a Lewis acid cofactor.</text>
</comment>
<comment type="cofactor">
    <cofactor evidence="1">
        <name>Mg(2+)</name>
        <dbReference type="ChEBI" id="CHEBI:18420"/>
    </cofactor>
</comment>
<comment type="pathway">
    <text evidence="1">Amino-acid biosynthesis; L-isoleucine biosynthesis; L-isoleucine from 2-oxobutanoate: step 3/4.</text>
</comment>
<comment type="pathway">
    <text evidence="1">Amino-acid biosynthesis; L-valine biosynthesis; L-valine from pyruvate: step 3/4.</text>
</comment>
<comment type="subunit">
    <text evidence="1">Homodimer.</text>
</comment>
<comment type="similarity">
    <text evidence="1">Belongs to the IlvD/Edd family.</text>
</comment>
<proteinExistence type="inferred from homology"/>
<feature type="chain" id="PRO_0000225376" description="Dihydroxy-acid dehydratase">
    <location>
        <begin position="1"/>
        <end position="557"/>
    </location>
</feature>
<feature type="active site" description="Proton acceptor" evidence="1">
    <location>
        <position position="473"/>
    </location>
</feature>
<feature type="binding site" evidence="1">
    <location>
        <position position="50"/>
    </location>
    <ligand>
        <name>[2Fe-2S] cluster</name>
        <dbReference type="ChEBI" id="CHEBI:190135"/>
    </ligand>
</feature>
<feature type="binding site" evidence="1">
    <location>
        <position position="82"/>
    </location>
    <ligand>
        <name>Mg(2+)</name>
        <dbReference type="ChEBI" id="CHEBI:18420"/>
    </ligand>
</feature>
<feature type="binding site" evidence="1">
    <location>
        <position position="123"/>
    </location>
    <ligand>
        <name>[2Fe-2S] cluster</name>
        <dbReference type="ChEBI" id="CHEBI:190135"/>
    </ligand>
</feature>
<feature type="binding site" evidence="1">
    <location>
        <position position="124"/>
    </location>
    <ligand>
        <name>Mg(2+)</name>
        <dbReference type="ChEBI" id="CHEBI:18420"/>
    </ligand>
</feature>
<feature type="binding site" description="via carbamate group" evidence="1">
    <location>
        <position position="125"/>
    </location>
    <ligand>
        <name>Mg(2+)</name>
        <dbReference type="ChEBI" id="CHEBI:18420"/>
    </ligand>
</feature>
<feature type="binding site" evidence="1">
    <location>
        <position position="195"/>
    </location>
    <ligand>
        <name>[2Fe-2S] cluster</name>
        <dbReference type="ChEBI" id="CHEBI:190135"/>
    </ligand>
</feature>
<feature type="binding site" evidence="1">
    <location>
        <position position="447"/>
    </location>
    <ligand>
        <name>Mg(2+)</name>
        <dbReference type="ChEBI" id="CHEBI:18420"/>
    </ligand>
</feature>
<feature type="modified residue" description="N6-carboxylysine" evidence="1">
    <location>
        <position position="125"/>
    </location>
</feature>
<protein>
    <recommendedName>
        <fullName evidence="1">Dihydroxy-acid dehydratase</fullName>
        <shortName evidence="1">DAD</shortName>
        <ecNumber evidence="1">4.2.1.9</ecNumber>
    </recommendedName>
</protein>
<reference key="1">
    <citation type="journal article" date="2004" name="Proc. Natl. Acad. Sci. U.S.A.">
        <title>Structural flexibility in the Burkholderia mallei genome.</title>
        <authorList>
            <person name="Nierman W.C."/>
            <person name="DeShazer D."/>
            <person name="Kim H.S."/>
            <person name="Tettelin H."/>
            <person name="Nelson K.E."/>
            <person name="Feldblyum T.V."/>
            <person name="Ulrich R.L."/>
            <person name="Ronning C.M."/>
            <person name="Brinkac L.M."/>
            <person name="Daugherty S.C."/>
            <person name="Davidsen T.D."/>
            <person name="DeBoy R.T."/>
            <person name="Dimitrov G."/>
            <person name="Dodson R.J."/>
            <person name="Durkin A.S."/>
            <person name="Gwinn M.L."/>
            <person name="Haft D.H."/>
            <person name="Khouri H.M."/>
            <person name="Kolonay J.F."/>
            <person name="Madupu R."/>
            <person name="Mohammoud Y."/>
            <person name="Nelson W.C."/>
            <person name="Radune D."/>
            <person name="Romero C.M."/>
            <person name="Sarria S."/>
            <person name="Selengut J."/>
            <person name="Shamblin C."/>
            <person name="Sullivan S.A."/>
            <person name="White O."/>
            <person name="Yu Y."/>
            <person name="Zafar N."/>
            <person name="Zhou L."/>
            <person name="Fraser C.M."/>
        </authorList>
    </citation>
    <scope>NUCLEOTIDE SEQUENCE [LARGE SCALE GENOMIC DNA]</scope>
    <source>
        <strain>ATCC 23344</strain>
    </source>
</reference>
<keyword id="KW-0001">2Fe-2S</keyword>
<keyword id="KW-0028">Amino-acid biosynthesis</keyword>
<keyword id="KW-0100">Branched-chain amino acid biosynthesis</keyword>
<keyword id="KW-0408">Iron</keyword>
<keyword id="KW-0411">Iron-sulfur</keyword>
<keyword id="KW-0456">Lyase</keyword>
<keyword id="KW-0460">Magnesium</keyword>
<keyword id="KW-0479">Metal-binding</keyword>
<keyword id="KW-1185">Reference proteome</keyword>
<gene>
    <name evidence="1" type="primary">ilvD</name>
    <name type="ordered locus">BMA0677</name>
</gene>
<accession>Q62LG7</accession>
<sequence>MSYNRRSKNITQGVARSPNRSMYYALGYQKEDFDKPMIGIANGHSTITPCNAGLQRLSDAAVAAVKDAGANPQIFGTPTISDGMSMGTEGMKYSLVSREVIADCIETCVQGQWMDGVVVVGGCDKNMPGGMIALARINVPGIYVYGGTIRPGHWKGHDLTIVSSFEAVGEFTAGRMSQEDFEGVEKNACPTTGSCGGMYTANTMSSSFEALGMSLLYSSTMANPDQEKVDSAAESARVLVEAVKKDLKPRDIITKQSIENAVSVIMATGGSTNAVLHYLAIAHAAEIDWSIEDFERIRKRVPVICDLKPSGQYVATDLHAAGGIPQVMKLLLDAGLLHGDCMTITGRTLAEELKDVPSVPRADQKVIHPIDQALYKEGHLAILKGNLAEDGAVAKITGLKNPVITGPARVFDDEQSALAAILDDRIRAGDVVVLRYLGPQGGPGMPEMLAPTSAIIGKGLGESVGLITDGRFSGGTWGMVVGHVAPEAFVGGTIALVQEGDSITIDAHKLLLQLNVDDAELARRRAAWKQPAPRYTRGVLAKYAALARPANQGAVTG</sequence>